<organism>
    <name type="scientific">Dasypus novemcinctus</name>
    <name type="common">Nine-banded armadillo</name>
    <dbReference type="NCBI Taxonomy" id="9361"/>
    <lineage>
        <taxon>Eukaryota</taxon>
        <taxon>Metazoa</taxon>
        <taxon>Chordata</taxon>
        <taxon>Craniata</taxon>
        <taxon>Vertebrata</taxon>
        <taxon>Euteleostomi</taxon>
        <taxon>Mammalia</taxon>
        <taxon>Eutheria</taxon>
        <taxon>Xenarthra</taxon>
        <taxon>Cingulata</taxon>
        <taxon>Dasypodidae</taxon>
        <taxon>Dasypus</taxon>
    </lineage>
</organism>
<reference key="1">
    <citation type="journal article" date="1991" name="Proc. Natl. Acad. Sci. U.S.A.">
        <title>Molecular phylogeny of the superorder Archonta.</title>
        <authorList>
            <person name="Adkins R.M."/>
            <person name="Honeycutt R.L."/>
        </authorList>
    </citation>
    <scope>NUCLEOTIDE SEQUENCE [GENOMIC DNA]</scope>
</reference>
<reference key="2">
    <citation type="journal article" date="1997" name="Mol. Biol. Evol.">
        <title>Phylogenetic analyses of mitochondrial DNA suggest a sister group relationship between Xenarthra (Edentata) and Ferungulates.</title>
        <authorList>
            <person name="Arnason U."/>
            <person name="Gullberg A."/>
            <person name="Janke A."/>
        </authorList>
    </citation>
    <scope>NUCLEOTIDE SEQUENCE [GENOMIC DNA]</scope>
</reference>
<sequence>MPYPLQLGFQDATSPIMEELLHFHDHTLMIVFLISSLVLYIITLMLTTKLTHTSTMDAQEVETVWTILPAVILILIALPSLRILYMMDEINNPLLTIKAMGHQWYWSYEYTDYEDLNFDSYMVPTSDLKPGELRLLEVDNRLVLPMELSIRMLISSEDVLHSWAVPSLGLKTDAIPGRLNQATLMATRPGLYYGQCSEICGSNHSFMPIVLELVPLKHFEDWSTSML</sequence>
<dbReference type="EC" id="7.1.1.9"/>
<dbReference type="EMBL" id="M80903">
    <property type="protein sequence ID" value="AAA68617.1"/>
    <property type="molecule type" value="Genomic_DNA"/>
</dbReference>
<dbReference type="EMBL" id="Y11832">
    <property type="protein sequence ID" value="CAA72526.1"/>
    <property type="molecule type" value="Genomic_DNA"/>
</dbReference>
<dbReference type="PIR" id="T11444">
    <property type="entry name" value="T11444"/>
</dbReference>
<dbReference type="RefSeq" id="NP_007462.1">
    <property type="nucleotide sequence ID" value="NC_001821.1"/>
</dbReference>
<dbReference type="SMR" id="P50687"/>
<dbReference type="GeneID" id="808136"/>
<dbReference type="KEGG" id="dnm:808136"/>
<dbReference type="CTD" id="4513"/>
<dbReference type="HOGENOM" id="CLU_036876_2_3_1"/>
<dbReference type="OMA" id="WSYEYTD"/>
<dbReference type="GO" id="GO:0005743">
    <property type="term" value="C:mitochondrial inner membrane"/>
    <property type="evidence" value="ECO:0007669"/>
    <property type="project" value="UniProtKB-SubCell"/>
</dbReference>
<dbReference type="GO" id="GO:0045277">
    <property type="term" value="C:respiratory chain complex IV"/>
    <property type="evidence" value="ECO:0000250"/>
    <property type="project" value="UniProtKB"/>
</dbReference>
<dbReference type="GO" id="GO:0005507">
    <property type="term" value="F:copper ion binding"/>
    <property type="evidence" value="ECO:0007669"/>
    <property type="project" value="InterPro"/>
</dbReference>
<dbReference type="GO" id="GO:0004129">
    <property type="term" value="F:cytochrome-c oxidase activity"/>
    <property type="evidence" value="ECO:0007669"/>
    <property type="project" value="UniProtKB-EC"/>
</dbReference>
<dbReference type="GO" id="GO:0042773">
    <property type="term" value="P:ATP synthesis coupled electron transport"/>
    <property type="evidence" value="ECO:0007669"/>
    <property type="project" value="TreeGrafter"/>
</dbReference>
<dbReference type="CDD" id="cd13912">
    <property type="entry name" value="CcO_II_C"/>
    <property type="match status" value="1"/>
</dbReference>
<dbReference type="FunFam" id="1.10.287.90:FF:000001">
    <property type="entry name" value="Cytochrome c oxidase subunit 2"/>
    <property type="match status" value="1"/>
</dbReference>
<dbReference type="FunFam" id="2.60.40.420:FF:000001">
    <property type="entry name" value="Cytochrome c oxidase subunit 2"/>
    <property type="match status" value="1"/>
</dbReference>
<dbReference type="Gene3D" id="1.10.287.90">
    <property type="match status" value="1"/>
</dbReference>
<dbReference type="Gene3D" id="2.60.40.420">
    <property type="entry name" value="Cupredoxins - blue copper proteins"/>
    <property type="match status" value="1"/>
</dbReference>
<dbReference type="InterPro" id="IPR045187">
    <property type="entry name" value="CcO_II"/>
</dbReference>
<dbReference type="InterPro" id="IPR002429">
    <property type="entry name" value="CcO_II-like_C"/>
</dbReference>
<dbReference type="InterPro" id="IPR034210">
    <property type="entry name" value="CcO_II_C"/>
</dbReference>
<dbReference type="InterPro" id="IPR001505">
    <property type="entry name" value="Copper_CuA"/>
</dbReference>
<dbReference type="InterPro" id="IPR008972">
    <property type="entry name" value="Cupredoxin"/>
</dbReference>
<dbReference type="InterPro" id="IPR014222">
    <property type="entry name" value="Cyt_c_oxidase_su2"/>
</dbReference>
<dbReference type="InterPro" id="IPR011759">
    <property type="entry name" value="Cyt_c_oxidase_su2_TM_dom"/>
</dbReference>
<dbReference type="InterPro" id="IPR036257">
    <property type="entry name" value="Cyt_c_oxidase_su2_TM_sf"/>
</dbReference>
<dbReference type="NCBIfam" id="TIGR02866">
    <property type="entry name" value="CoxB"/>
    <property type="match status" value="1"/>
</dbReference>
<dbReference type="PANTHER" id="PTHR22888:SF9">
    <property type="entry name" value="CYTOCHROME C OXIDASE SUBUNIT 2"/>
    <property type="match status" value="1"/>
</dbReference>
<dbReference type="PANTHER" id="PTHR22888">
    <property type="entry name" value="CYTOCHROME C OXIDASE, SUBUNIT II"/>
    <property type="match status" value="1"/>
</dbReference>
<dbReference type="Pfam" id="PF00116">
    <property type="entry name" value="COX2"/>
    <property type="match status" value="1"/>
</dbReference>
<dbReference type="Pfam" id="PF02790">
    <property type="entry name" value="COX2_TM"/>
    <property type="match status" value="1"/>
</dbReference>
<dbReference type="PRINTS" id="PR01166">
    <property type="entry name" value="CYCOXIDASEII"/>
</dbReference>
<dbReference type="SUPFAM" id="SSF49503">
    <property type="entry name" value="Cupredoxins"/>
    <property type="match status" value="1"/>
</dbReference>
<dbReference type="SUPFAM" id="SSF81464">
    <property type="entry name" value="Cytochrome c oxidase subunit II-like, transmembrane region"/>
    <property type="match status" value="1"/>
</dbReference>
<dbReference type="PROSITE" id="PS00078">
    <property type="entry name" value="COX2"/>
    <property type="match status" value="1"/>
</dbReference>
<dbReference type="PROSITE" id="PS50857">
    <property type="entry name" value="COX2_CUA"/>
    <property type="match status" value="1"/>
</dbReference>
<dbReference type="PROSITE" id="PS50999">
    <property type="entry name" value="COX2_TM"/>
    <property type="match status" value="1"/>
</dbReference>
<geneLocation type="mitochondrion"/>
<protein>
    <recommendedName>
        <fullName>Cytochrome c oxidase subunit 2</fullName>
        <ecNumber>7.1.1.9</ecNumber>
    </recommendedName>
    <alternativeName>
        <fullName>Cytochrome c oxidase polypeptide II</fullName>
    </alternativeName>
</protein>
<keyword id="KW-0186">Copper</keyword>
<keyword id="KW-0249">Electron transport</keyword>
<keyword id="KW-0460">Magnesium</keyword>
<keyword id="KW-0472">Membrane</keyword>
<keyword id="KW-0479">Metal-binding</keyword>
<keyword id="KW-0496">Mitochondrion</keyword>
<keyword id="KW-0999">Mitochondrion inner membrane</keyword>
<keyword id="KW-0679">Respiratory chain</keyword>
<keyword id="KW-1278">Translocase</keyword>
<keyword id="KW-0812">Transmembrane</keyword>
<keyword id="KW-1133">Transmembrane helix</keyword>
<keyword id="KW-0813">Transport</keyword>
<evidence type="ECO:0000250" key="1">
    <source>
        <dbReference type="UniProtKB" id="P00403"/>
    </source>
</evidence>
<evidence type="ECO:0000250" key="2">
    <source>
        <dbReference type="UniProtKB" id="P00410"/>
    </source>
</evidence>
<evidence type="ECO:0000250" key="3">
    <source>
        <dbReference type="UniProtKB" id="P68530"/>
    </source>
</evidence>
<evidence type="ECO:0000305" key="4"/>
<accession>P50687</accession>
<accession>O21328</accession>
<gene>
    <name type="primary">MT-CO2</name>
    <name type="synonym">COII</name>
    <name type="synonym">COX2</name>
    <name type="synonym">COXII</name>
    <name type="synonym">MTCO2</name>
</gene>
<proteinExistence type="inferred from homology"/>
<feature type="chain" id="PRO_0000183566" description="Cytochrome c oxidase subunit 2">
    <location>
        <begin position="1"/>
        <end position="227"/>
    </location>
</feature>
<feature type="topological domain" description="Mitochondrial intermembrane" evidence="3">
    <location>
        <begin position="1"/>
        <end position="14"/>
    </location>
</feature>
<feature type="transmembrane region" description="Helical; Name=I" evidence="3">
    <location>
        <begin position="15"/>
        <end position="45"/>
    </location>
</feature>
<feature type="topological domain" description="Mitochondrial matrix" evidence="3">
    <location>
        <begin position="46"/>
        <end position="59"/>
    </location>
</feature>
<feature type="transmembrane region" description="Helical; Name=II" evidence="3">
    <location>
        <begin position="60"/>
        <end position="87"/>
    </location>
</feature>
<feature type="topological domain" description="Mitochondrial intermembrane" evidence="3">
    <location>
        <begin position="88"/>
        <end position="227"/>
    </location>
</feature>
<feature type="binding site" evidence="3">
    <location>
        <position position="161"/>
    </location>
    <ligand>
        <name>Cu cation</name>
        <dbReference type="ChEBI" id="CHEBI:23378"/>
        <label>A1</label>
    </ligand>
</feature>
<feature type="binding site" evidence="3">
    <location>
        <position position="196"/>
    </location>
    <ligand>
        <name>Cu cation</name>
        <dbReference type="ChEBI" id="CHEBI:23378"/>
        <label>A1</label>
    </ligand>
</feature>
<feature type="binding site" evidence="3">
    <location>
        <position position="196"/>
    </location>
    <ligand>
        <name>Cu cation</name>
        <dbReference type="ChEBI" id="CHEBI:23378"/>
        <label>A2</label>
    </ligand>
</feature>
<feature type="binding site" evidence="3">
    <location>
        <position position="198"/>
    </location>
    <ligand>
        <name>Cu cation</name>
        <dbReference type="ChEBI" id="CHEBI:23378"/>
        <label>A2</label>
    </ligand>
</feature>
<feature type="binding site" evidence="3">
    <location>
        <position position="198"/>
    </location>
    <ligand>
        <name>Mg(2+)</name>
        <dbReference type="ChEBI" id="CHEBI:18420"/>
        <note>ligand shared with MT-CO1</note>
    </ligand>
</feature>
<feature type="binding site" evidence="3">
    <location>
        <position position="200"/>
    </location>
    <ligand>
        <name>Cu cation</name>
        <dbReference type="ChEBI" id="CHEBI:23378"/>
        <label>A1</label>
    </ligand>
</feature>
<feature type="binding site" evidence="3">
    <location>
        <position position="200"/>
    </location>
    <ligand>
        <name>Cu cation</name>
        <dbReference type="ChEBI" id="CHEBI:23378"/>
        <label>A2</label>
    </ligand>
</feature>
<feature type="binding site" evidence="3">
    <location>
        <position position="204"/>
    </location>
    <ligand>
        <name>Cu cation</name>
        <dbReference type="ChEBI" id="CHEBI:23378"/>
        <label>A2</label>
    </ligand>
</feature>
<feature type="binding site" evidence="3">
    <location>
        <position position="207"/>
    </location>
    <ligand>
        <name>Cu cation</name>
        <dbReference type="ChEBI" id="CHEBI:23378"/>
        <label>A1</label>
    </ligand>
</feature>
<feature type="sequence conflict" description="In Ref. 1." evidence="4" ref="1">
    <original>MPYPL</original>
    <variation>MALPI</variation>
    <location>
        <begin position="1"/>
        <end position="5"/>
    </location>
</feature>
<feature type="sequence conflict" description="In Ref. 1; AAA68617." evidence="4" ref="1">
    <original>T</original>
    <variation>A</variation>
    <location>
        <position position="224"/>
    </location>
</feature>
<name>COX2_DASNO</name>
<comment type="function">
    <text evidence="2">Component of the cytochrome c oxidase, the last enzyme in the mitochondrial electron transport chain which drives oxidative phosphorylation. The respiratory chain contains 3 multisubunit complexes succinate dehydrogenase (complex II, CII), ubiquinol-cytochrome c oxidoreductase (cytochrome b-c1 complex, complex III, CIII) and cytochrome c oxidase (complex IV, CIV), that cooperate to transfer electrons derived from NADH and succinate to molecular oxygen, creating an electrochemical gradient over the inner membrane that drives transmembrane transport and the ATP synthase. Cytochrome c oxidase is the component of the respiratory chain that catalyzes the reduction of oxygen to water. Electrons originating from reduced cytochrome c in the intermembrane space (IMS) are transferred via the dinuclear copper A center (CU(A)) of subunit 2 and heme A of subunit 1 to the active site in subunit 1, a binuclear center (BNC) formed by heme A3 and copper B (CU(B)). The BNC reduces molecular oxygen to 2 water molecules using 4 electrons from cytochrome c in the IMS and 4 protons from the mitochondrial matrix.</text>
</comment>
<comment type="catalytic activity">
    <reaction evidence="2">
        <text>4 Fe(II)-[cytochrome c] + O2 + 8 H(+)(in) = 4 Fe(III)-[cytochrome c] + 2 H2O + 4 H(+)(out)</text>
        <dbReference type="Rhea" id="RHEA:11436"/>
        <dbReference type="Rhea" id="RHEA-COMP:10350"/>
        <dbReference type="Rhea" id="RHEA-COMP:14399"/>
        <dbReference type="ChEBI" id="CHEBI:15377"/>
        <dbReference type="ChEBI" id="CHEBI:15378"/>
        <dbReference type="ChEBI" id="CHEBI:15379"/>
        <dbReference type="ChEBI" id="CHEBI:29033"/>
        <dbReference type="ChEBI" id="CHEBI:29034"/>
        <dbReference type="EC" id="7.1.1.9"/>
    </reaction>
    <physiologicalReaction direction="left-to-right" evidence="2">
        <dbReference type="Rhea" id="RHEA:11437"/>
    </physiologicalReaction>
</comment>
<comment type="cofactor">
    <cofactor evidence="3">
        <name>Cu cation</name>
        <dbReference type="ChEBI" id="CHEBI:23378"/>
    </cofactor>
    <text evidence="3">Binds a dinuclear copper A center per subunit.</text>
</comment>
<comment type="subunit">
    <text evidence="1 3">Component of the cytochrome c oxidase (complex IV, CIV), a multisubunit enzyme composed of 14 subunits. The complex is composed of a catalytic core of 3 subunits MT-CO1, MT-CO2 and MT-CO3, encoded in the mitochondrial DNA, and 11 supernumerary subunits COX4I, COX5A, COX5B, COX6A, COX6B, COX6C, COX7A, COX7B, COX7C, COX8 and NDUFA4, which are encoded in the nuclear genome. The complex exists as a monomer or a dimer and forms supercomplexes (SCs) in the inner mitochondrial membrane with NADH-ubiquinone oxidoreductase (complex I, CI) and ubiquinol-cytochrome c oxidoreductase (cytochrome b-c1 complex, complex III, CIII), resulting in different assemblies (supercomplex SCI(1)III(2)IV(1) and megacomplex MCI(2)III(2)IV(2)) (By similarity). Found in a complex with TMEM177, COA6, COX18, COX20, SCO1 and SCO2. Interacts with TMEM177 in a COX20-dependent manner. Interacts with COX20. Interacts with COX16 (By similarity).</text>
</comment>
<comment type="subcellular location">
    <subcellularLocation>
        <location evidence="3">Mitochondrion inner membrane</location>
        <topology evidence="3">Multi-pass membrane protein</topology>
    </subcellularLocation>
</comment>
<comment type="similarity">
    <text evidence="4">Belongs to the cytochrome c oxidase subunit 2 family.</text>
</comment>